<sequence length="455" mass="50431">MKKIEMYHHKKVLVLGLARSGVSAATIMHKLGAFVTVNDQKPFSENPEAQGLLEQGIKVICGSHPIELLDEGFELVIKNPGIPYNNPMIEKALKLKIPVITEVELAYQISEAPIVGITGTNGKTTTTTIIHHMLNTHKENSSLLAGNIGFPASAVAENATSDQYISMELSSFQLMGVETFKPHISVITNIYEAHLDYHTDRSEYVQAKWHIQKNQIADDFLVINWDQEELKNLTKQTKAQVIPFSTTQRLGQGSYVQNGNIMFNDEVIGERDNILLPGEHNLENVLASVAVAKTLGVTNEEIMHVLETFKGVEHRTQFVVEWQGRKFYNDSKATNILATQSALKGFKNPVVLLAGGLDRGNSFDELLPFFKNVKTLIVFGETADKIGRVGKIAGIEVHYVDNVEAAVPVAYRESAPGDIILLSPACASWDQYRTFEVRGNAYMDAIGELIEEVEK</sequence>
<protein>
    <recommendedName>
        <fullName evidence="1">UDP-N-acetylmuramoylalanine--D-glutamate ligase</fullName>
        <ecNumber evidence="1">6.3.2.9</ecNumber>
    </recommendedName>
    <alternativeName>
        <fullName evidence="1">D-glutamic acid-adding enzyme</fullName>
    </alternativeName>
    <alternativeName>
        <fullName evidence="1">UDP-N-acetylmuramoyl-L-alanyl-D-glutamate synthetase</fullName>
    </alternativeName>
</protein>
<reference key="1">
    <citation type="journal article" date="2001" name="Science">
        <title>Comparative genomics of Listeria species.</title>
        <authorList>
            <person name="Glaser P."/>
            <person name="Frangeul L."/>
            <person name="Buchrieser C."/>
            <person name="Rusniok C."/>
            <person name="Amend A."/>
            <person name="Baquero F."/>
            <person name="Berche P."/>
            <person name="Bloecker H."/>
            <person name="Brandt P."/>
            <person name="Chakraborty T."/>
            <person name="Charbit A."/>
            <person name="Chetouani F."/>
            <person name="Couve E."/>
            <person name="de Daruvar A."/>
            <person name="Dehoux P."/>
            <person name="Domann E."/>
            <person name="Dominguez-Bernal G."/>
            <person name="Duchaud E."/>
            <person name="Durant L."/>
            <person name="Dussurget O."/>
            <person name="Entian K.-D."/>
            <person name="Fsihi H."/>
            <person name="Garcia-del Portillo F."/>
            <person name="Garrido P."/>
            <person name="Gautier L."/>
            <person name="Goebel W."/>
            <person name="Gomez-Lopez N."/>
            <person name="Hain T."/>
            <person name="Hauf J."/>
            <person name="Jackson D."/>
            <person name="Jones L.-M."/>
            <person name="Kaerst U."/>
            <person name="Kreft J."/>
            <person name="Kuhn M."/>
            <person name="Kunst F."/>
            <person name="Kurapkat G."/>
            <person name="Madueno E."/>
            <person name="Maitournam A."/>
            <person name="Mata Vicente J."/>
            <person name="Ng E."/>
            <person name="Nedjari H."/>
            <person name="Nordsiek G."/>
            <person name="Novella S."/>
            <person name="de Pablos B."/>
            <person name="Perez-Diaz J.-C."/>
            <person name="Purcell R."/>
            <person name="Remmel B."/>
            <person name="Rose M."/>
            <person name="Schlueter T."/>
            <person name="Simoes N."/>
            <person name="Tierrez A."/>
            <person name="Vazquez-Boland J.-A."/>
            <person name="Voss H."/>
            <person name="Wehland J."/>
            <person name="Cossart P."/>
        </authorList>
    </citation>
    <scope>NUCLEOTIDE SEQUENCE [LARGE SCALE GENOMIC DNA]</scope>
    <source>
        <strain>ATCC BAA-679 / EGD-e</strain>
    </source>
</reference>
<dbReference type="EC" id="6.3.2.9" evidence="1"/>
<dbReference type="EMBL" id="AL591982">
    <property type="protein sequence ID" value="CAD00114.1"/>
    <property type="molecule type" value="Genomic_DNA"/>
</dbReference>
<dbReference type="PIR" id="AD1329">
    <property type="entry name" value="AD1329"/>
</dbReference>
<dbReference type="RefSeq" id="NP_465560.1">
    <property type="nucleotide sequence ID" value="NC_003210.1"/>
</dbReference>
<dbReference type="RefSeq" id="WP_010989879.1">
    <property type="nucleotide sequence ID" value="NZ_CP149495.1"/>
</dbReference>
<dbReference type="SMR" id="Q8Y5M1"/>
<dbReference type="STRING" id="169963.gene:17594721"/>
<dbReference type="PaxDb" id="169963-lmo2036"/>
<dbReference type="EnsemblBacteria" id="CAD00114">
    <property type="protein sequence ID" value="CAD00114"/>
    <property type="gene ID" value="CAD00114"/>
</dbReference>
<dbReference type="GeneID" id="987942"/>
<dbReference type="KEGG" id="lmo:lmo2036"/>
<dbReference type="PATRIC" id="fig|169963.11.peg.2084"/>
<dbReference type="eggNOG" id="COG0771">
    <property type="taxonomic scope" value="Bacteria"/>
</dbReference>
<dbReference type="HOGENOM" id="CLU_032540_0_1_9"/>
<dbReference type="OrthoDB" id="9809796at2"/>
<dbReference type="PhylomeDB" id="Q8Y5M1"/>
<dbReference type="BioCyc" id="LMON169963:LMO2036-MONOMER"/>
<dbReference type="UniPathway" id="UPA00219"/>
<dbReference type="Proteomes" id="UP000000817">
    <property type="component" value="Chromosome"/>
</dbReference>
<dbReference type="GO" id="GO:0005737">
    <property type="term" value="C:cytoplasm"/>
    <property type="evidence" value="ECO:0007669"/>
    <property type="project" value="UniProtKB-SubCell"/>
</dbReference>
<dbReference type="GO" id="GO:0005524">
    <property type="term" value="F:ATP binding"/>
    <property type="evidence" value="ECO:0007669"/>
    <property type="project" value="UniProtKB-UniRule"/>
</dbReference>
<dbReference type="GO" id="GO:0004326">
    <property type="term" value="F:tetrahydrofolylpolyglutamate synthase activity"/>
    <property type="evidence" value="ECO:0007669"/>
    <property type="project" value="InterPro"/>
</dbReference>
<dbReference type="GO" id="GO:0008764">
    <property type="term" value="F:UDP-N-acetylmuramoylalanine-D-glutamate ligase activity"/>
    <property type="evidence" value="ECO:0007669"/>
    <property type="project" value="UniProtKB-UniRule"/>
</dbReference>
<dbReference type="GO" id="GO:0051301">
    <property type="term" value="P:cell division"/>
    <property type="evidence" value="ECO:0007669"/>
    <property type="project" value="UniProtKB-KW"/>
</dbReference>
<dbReference type="GO" id="GO:0071555">
    <property type="term" value="P:cell wall organization"/>
    <property type="evidence" value="ECO:0007669"/>
    <property type="project" value="UniProtKB-KW"/>
</dbReference>
<dbReference type="GO" id="GO:0009252">
    <property type="term" value="P:peptidoglycan biosynthetic process"/>
    <property type="evidence" value="ECO:0007669"/>
    <property type="project" value="UniProtKB-UniRule"/>
</dbReference>
<dbReference type="GO" id="GO:0008360">
    <property type="term" value="P:regulation of cell shape"/>
    <property type="evidence" value="ECO:0007669"/>
    <property type="project" value="UniProtKB-KW"/>
</dbReference>
<dbReference type="Gene3D" id="3.90.190.20">
    <property type="entry name" value="Mur ligase, C-terminal domain"/>
    <property type="match status" value="1"/>
</dbReference>
<dbReference type="Gene3D" id="3.40.1190.10">
    <property type="entry name" value="Mur-like, catalytic domain"/>
    <property type="match status" value="1"/>
</dbReference>
<dbReference type="Gene3D" id="3.40.50.720">
    <property type="entry name" value="NAD(P)-binding Rossmann-like Domain"/>
    <property type="match status" value="1"/>
</dbReference>
<dbReference type="HAMAP" id="MF_00639">
    <property type="entry name" value="MurD"/>
    <property type="match status" value="1"/>
</dbReference>
<dbReference type="InterPro" id="IPR018109">
    <property type="entry name" value="Folylpolyglutamate_synth_CS"/>
</dbReference>
<dbReference type="InterPro" id="IPR036565">
    <property type="entry name" value="Mur-like_cat_sf"/>
</dbReference>
<dbReference type="InterPro" id="IPR004101">
    <property type="entry name" value="Mur_ligase_C"/>
</dbReference>
<dbReference type="InterPro" id="IPR036615">
    <property type="entry name" value="Mur_ligase_C_dom_sf"/>
</dbReference>
<dbReference type="InterPro" id="IPR013221">
    <property type="entry name" value="Mur_ligase_cen"/>
</dbReference>
<dbReference type="InterPro" id="IPR005762">
    <property type="entry name" value="MurD"/>
</dbReference>
<dbReference type="NCBIfam" id="TIGR01087">
    <property type="entry name" value="murD"/>
    <property type="match status" value="1"/>
</dbReference>
<dbReference type="PANTHER" id="PTHR43692">
    <property type="entry name" value="UDP-N-ACETYLMURAMOYLALANINE--D-GLUTAMATE LIGASE"/>
    <property type="match status" value="1"/>
</dbReference>
<dbReference type="PANTHER" id="PTHR43692:SF1">
    <property type="entry name" value="UDP-N-ACETYLMURAMOYLALANINE--D-GLUTAMATE LIGASE"/>
    <property type="match status" value="1"/>
</dbReference>
<dbReference type="Pfam" id="PF02875">
    <property type="entry name" value="Mur_ligase_C"/>
    <property type="match status" value="1"/>
</dbReference>
<dbReference type="Pfam" id="PF08245">
    <property type="entry name" value="Mur_ligase_M"/>
    <property type="match status" value="1"/>
</dbReference>
<dbReference type="Pfam" id="PF21799">
    <property type="entry name" value="MurD-like_N"/>
    <property type="match status" value="1"/>
</dbReference>
<dbReference type="SUPFAM" id="SSF51984">
    <property type="entry name" value="MurCD N-terminal domain"/>
    <property type="match status" value="1"/>
</dbReference>
<dbReference type="SUPFAM" id="SSF53623">
    <property type="entry name" value="MurD-like peptide ligases, catalytic domain"/>
    <property type="match status" value="1"/>
</dbReference>
<dbReference type="SUPFAM" id="SSF53244">
    <property type="entry name" value="MurD-like peptide ligases, peptide-binding domain"/>
    <property type="match status" value="1"/>
</dbReference>
<gene>
    <name evidence="1" type="primary">murD</name>
    <name type="ordered locus">lmo2036</name>
</gene>
<comment type="function">
    <text evidence="1">Cell wall formation. Catalyzes the addition of glutamate to the nucleotide precursor UDP-N-acetylmuramoyl-L-alanine (UMA).</text>
</comment>
<comment type="catalytic activity">
    <reaction evidence="1">
        <text>UDP-N-acetyl-alpha-D-muramoyl-L-alanine + D-glutamate + ATP = UDP-N-acetyl-alpha-D-muramoyl-L-alanyl-D-glutamate + ADP + phosphate + H(+)</text>
        <dbReference type="Rhea" id="RHEA:16429"/>
        <dbReference type="ChEBI" id="CHEBI:15378"/>
        <dbReference type="ChEBI" id="CHEBI:29986"/>
        <dbReference type="ChEBI" id="CHEBI:30616"/>
        <dbReference type="ChEBI" id="CHEBI:43474"/>
        <dbReference type="ChEBI" id="CHEBI:83898"/>
        <dbReference type="ChEBI" id="CHEBI:83900"/>
        <dbReference type="ChEBI" id="CHEBI:456216"/>
        <dbReference type="EC" id="6.3.2.9"/>
    </reaction>
</comment>
<comment type="pathway">
    <text evidence="1">Cell wall biogenesis; peptidoglycan biosynthesis.</text>
</comment>
<comment type="subcellular location">
    <subcellularLocation>
        <location evidence="1">Cytoplasm</location>
    </subcellularLocation>
</comment>
<comment type="similarity">
    <text evidence="1">Belongs to the MurCDEF family.</text>
</comment>
<name>MURD_LISMO</name>
<accession>Q8Y5M1</accession>
<keyword id="KW-0067">ATP-binding</keyword>
<keyword id="KW-0131">Cell cycle</keyword>
<keyword id="KW-0132">Cell division</keyword>
<keyword id="KW-0133">Cell shape</keyword>
<keyword id="KW-0961">Cell wall biogenesis/degradation</keyword>
<keyword id="KW-0963">Cytoplasm</keyword>
<keyword id="KW-0436">Ligase</keyword>
<keyword id="KW-0547">Nucleotide-binding</keyword>
<keyword id="KW-0573">Peptidoglycan synthesis</keyword>
<keyword id="KW-1185">Reference proteome</keyword>
<organism>
    <name type="scientific">Listeria monocytogenes serovar 1/2a (strain ATCC BAA-679 / EGD-e)</name>
    <dbReference type="NCBI Taxonomy" id="169963"/>
    <lineage>
        <taxon>Bacteria</taxon>
        <taxon>Bacillati</taxon>
        <taxon>Bacillota</taxon>
        <taxon>Bacilli</taxon>
        <taxon>Bacillales</taxon>
        <taxon>Listeriaceae</taxon>
        <taxon>Listeria</taxon>
    </lineage>
</organism>
<feature type="chain" id="PRO_0000109039" description="UDP-N-acetylmuramoylalanine--D-glutamate ligase">
    <location>
        <begin position="1"/>
        <end position="455"/>
    </location>
</feature>
<feature type="binding site" evidence="1">
    <location>
        <begin position="119"/>
        <end position="125"/>
    </location>
    <ligand>
        <name>ATP</name>
        <dbReference type="ChEBI" id="CHEBI:30616"/>
    </ligand>
</feature>
<proteinExistence type="inferred from homology"/>
<evidence type="ECO:0000255" key="1">
    <source>
        <dbReference type="HAMAP-Rule" id="MF_00639"/>
    </source>
</evidence>